<reference key="1">
    <citation type="journal article" date="2009" name="Genome Res.">
        <title>Comparative genomic analyses of the human fungal pathogens Coccidioides and their relatives.</title>
        <authorList>
            <person name="Sharpton T.J."/>
            <person name="Stajich J.E."/>
            <person name="Rounsley S.D."/>
            <person name="Gardner M.J."/>
            <person name="Wortman J.R."/>
            <person name="Jordar V.S."/>
            <person name="Maiti R."/>
            <person name="Kodira C.D."/>
            <person name="Neafsey D.E."/>
            <person name="Zeng Q."/>
            <person name="Hung C.-Y."/>
            <person name="McMahan C."/>
            <person name="Muszewska A."/>
            <person name="Grynberg M."/>
            <person name="Mandel M.A."/>
            <person name="Kellner E.M."/>
            <person name="Barker B.M."/>
            <person name="Galgiani J.N."/>
            <person name="Orbach M.J."/>
            <person name="Kirkland T.N."/>
            <person name="Cole G.T."/>
            <person name="Henn M.R."/>
            <person name="Birren B.W."/>
            <person name="Taylor J.W."/>
        </authorList>
    </citation>
    <scope>NUCLEOTIDE SEQUENCE [LARGE SCALE GENOMIC DNA]</scope>
    <source>
        <strain>NAm1 / WU24</strain>
    </source>
</reference>
<gene>
    <name type="ORF">HCAG_03671</name>
</gene>
<proteinExistence type="inferred from homology"/>
<sequence length="776" mass="82947">MTASTQNGSPTPPPAAPTATNQESKNMTANPADASESQSPANEKGGGTAENGQKHTSTAANAKDPLRPRRKKAKRACFACQRAHLTCGDERPCQRCIKRGLQDACHDGVRKKAKYLHDAPNEALMPGIRRNFYNQANATRTNASQQQNGPNSNSNKDSRQNVAANFYSPQSASNFDVYTQAKSQQGQGHIPPTVMQDTSINPSAFQAPSPTSTPNFDLSSNPPNRNLSSAMTQTPSSASNQTQDPFGAAFFDPSHPALFNFDIASMNFGNRYGALEFGMLGHMATGAGDTPPSDSATQRGSIGRSSGTFTAQNFGDSTNTQPPFLFGDPVLNDWNPSGQSQTNPRNNNIYNQNTVAGQMGEQHPNAFAIESAPMNFASPGSTESPQMTTMNQFDEANAKFSSRTALMHQTNPHQPPPISTPGLKHQGFQVGVKRRYRSPSSIYESVKEPYSYTSGFHNLTAFIQRRFSPQKTLQIAKALASIRPSFIATTKTLNQDDLIFMEKCFQRTLWEYEDFINACGTPTIVCRRTGEIAAVGKEFSILTGWKKEVLLGKEPNLNVNTGGSSPRGSGTFTPRNGNGVDPHSGMSASGGGGGRTQPVFLAELLDDDSVIEFYEDFAKLAFGDSRGSVMTTCKLLKYKTKEDSAALFQGREAQQGGPDGKGGGGGGGDVATTAATTSTSTSNGANSSGHANANRNNTNPNNSSPPSSSSAAAAGPLHGAQLSPKQTWGKRGIAGEAGMNQLGFRDGKVECSYCWTVKRDVFDIPMLIVMNFLPCI</sequence>
<keyword id="KW-0010">Activator</keyword>
<keyword id="KW-0238">DNA-binding</keyword>
<keyword id="KW-0312">Gluconeogenesis</keyword>
<keyword id="KW-0479">Metal-binding</keyword>
<keyword id="KW-0539">Nucleus</keyword>
<keyword id="KW-1185">Reference proteome</keyword>
<keyword id="KW-0804">Transcription</keyword>
<keyword id="KW-0805">Transcription regulation</keyword>
<keyword id="KW-0862">Zinc</keyword>
<feature type="chain" id="PRO_0000406425" description="Transcription activator of gluconeogenesis HCAG_03671">
    <location>
        <begin position="1"/>
        <end position="776"/>
    </location>
</feature>
<feature type="DNA-binding region" description="Zn(2)-C6 fungal-type" evidence="2">
    <location>
        <begin position="77"/>
        <end position="105"/>
    </location>
</feature>
<feature type="region of interest" description="Disordered" evidence="3">
    <location>
        <begin position="1"/>
        <end position="70"/>
    </location>
</feature>
<feature type="region of interest" description="Disordered" evidence="3">
    <location>
        <begin position="140"/>
        <end position="159"/>
    </location>
</feature>
<feature type="region of interest" description="Disordered" evidence="3">
    <location>
        <begin position="179"/>
        <end position="248"/>
    </location>
</feature>
<feature type="region of interest" description="Disordered" evidence="3">
    <location>
        <begin position="286"/>
        <end position="351"/>
    </location>
</feature>
<feature type="region of interest" description="Disordered" evidence="3">
    <location>
        <begin position="556"/>
        <end position="593"/>
    </location>
</feature>
<feature type="region of interest" description="Disordered" evidence="3">
    <location>
        <begin position="651"/>
        <end position="726"/>
    </location>
</feature>
<feature type="compositionally biased region" description="Polar residues" evidence="3">
    <location>
        <begin position="21"/>
        <end position="41"/>
    </location>
</feature>
<feature type="compositionally biased region" description="Polar residues" evidence="3">
    <location>
        <begin position="50"/>
        <end position="60"/>
    </location>
</feature>
<feature type="compositionally biased region" description="Low complexity" evidence="3">
    <location>
        <begin position="142"/>
        <end position="155"/>
    </location>
</feature>
<feature type="compositionally biased region" description="Polar residues" evidence="3">
    <location>
        <begin position="195"/>
        <end position="217"/>
    </location>
</feature>
<feature type="compositionally biased region" description="Low complexity" evidence="3">
    <location>
        <begin position="218"/>
        <end position="229"/>
    </location>
</feature>
<feature type="compositionally biased region" description="Polar residues" evidence="3">
    <location>
        <begin position="230"/>
        <end position="244"/>
    </location>
</feature>
<feature type="compositionally biased region" description="Polar residues" evidence="3">
    <location>
        <begin position="292"/>
        <end position="322"/>
    </location>
</feature>
<feature type="compositionally biased region" description="Polar residues" evidence="3">
    <location>
        <begin position="334"/>
        <end position="351"/>
    </location>
</feature>
<feature type="compositionally biased region" description="Polar residues" evidence="3">
    <location>
        <begin position="557"/>
        <end position="576"/>
    </location>
</feature>
<feature type="compositionally biased region" description="Gly residues" evidence="3">
    <location>
        <begin position="657"/>
        <end position="669"/>
    </location>
</feature>
<feature type="compositionally biased region" description="Low complexity" evidence="3">
    <location>
        <begin position="670"/>
        <end position="714"/>
    </location>
</feature>
<protein>
    <recommendedName>
        <fullName>Transcription activator of gluconeogenesis HCAG_03671</fullName>
    </recommendedName>
</protein>
<name>ACUK_AJECN</name>
<dbReference type="EMBL" id="CH476657">
    <property type="protein sequence ID" value="EDN07140.1"/>
    <property type="molecule type" value="Genomic_DNA"/>
</dbReference>
<dbReference type="RefSeq" id="XP_001541573.1">
    <property type="nucleotide sequence ID" value="XM_001541523.1"/>
</dbReference>
<dbReference type="GeneID" id="5447923"/>
<dbReference type="KEGG" id="aje:HCAG_03671"/>
<dbReference type="VEuPathDB" id="FungiDB:HCAG_03671"/>
<dbReference type="HOGENOM" id="CLU_010748_1_0_1"/>
<dbReference type="OMA" id="VMTTCKL"/>
<dbReference type="OrthoDB" id="9053at299071"/>
<dbReference type="Proteomes" id="UP000009297">
    <property type="component" value="Unassembled WGS sequence"/>
</dbReference>
<dbReference type="GO" id="GO:0005634">
    <property type="term" value="C:nucleus"/>
    <property type="evidence" value="ECO:0007669"/>
    <property type="project" value="UniProtKB-SubCell"/>
</dbReference>
<dbReference type="GO" id="GO:0000981">
    <property type="term" value="F:DNA-binding transcription factor activity, RNA polymerase II-specific"/>
    <property type="evidence" value="ECO:0007669"/>
    <property type="project" value="InterPro"/>
</dbReference>
<dbReference type="GO" id="GO:0000977">
    <property type="term" value="F:RNA polymerase II transcription regulatory region sequence-specific DNA binding"/>
    <property type="evidence" value="ECO:0007669"/>
    <property type="project" value="TreeGrafter"/>
</dbReference>
<dbReference type="GO" id="GO:0008270">
    <property type="term" value="F:zinc ion binding"/>
    <property type="evidence" value="ECO:0007669"/>
    <property type="project" value="InterPro"/>
</dbReference>
<dbReference type="GO" id="GO:0009267">
    <property type="term" value="P:cellular response to starvation"/>
    <property type="evidence" value="ECO:0007669"/>
    <property type="project" value="TreeGrafter"/>
</dbReference>
<dbReference type="GO" id="GO:0006094">
    <property type="term" value="P:gluconeogenesis"/>
    <property type="evidence" value="ECO:0007669"/>
    <property type="project" value="UniProtKB-KW"/>
</dbReference>
<dbReference type="CDD" id="cd00067">
    <property type="entry name" value="GAL4"/>
    <property type="match status" value="1"/>
</dbReference>
<dbReference type="Gene3D" id="4.10.240.10">
    <property type="entry name" value="Zn(2)-C6 fungal-type DNA-binding domain"/>
    <property type="match status" value="1"/>
</dbReference>
<dbReference type="InterPro" id="IPR050335">
    <property type="entry name" value="ERT1_acuK_gluconeogen_tf"/>
</dbReference>
<dbReference type="InterPro" id="IPR056751">
    <property type="entry name" value="PAS_13"/>
</dbReference>
<dbReference type="InterPro" id="IPR036864">
    <property type="entry name" value="Zn2-C6_fun-type_DNA-bd_sf"/>
</dbReference>
<dbReference type="InterPro" id="IPR001138">
    <property type="entry name" value="Zn2Cys6_DnaBD"/>
</dbReference>
<dbReference type="PANTHER" id="PTHR47659:SF1">
    <property type="entry name" value="TRANSCRIPTION ACTIVATOR OF GLUCONEOGENESIS ERT1"/>
    <property type="match status" value="1"/>
</dbReference>
<dbReference type="PANTHER" id="PTHR47659">
    <property type="entry name" value="ZN(II)2CYS6 TRANSCRIPTION FACTOR (EUROFUNG)-RELATED"/>
    <property type="match status" value="1"/>
</dbReference>
<dbReference type="Pfam" id="PF24990">
    <property type="entry name" value="PAS_13"/>
    <property type="match status" value="1"/>
</dbReference>
<dbReference type="SMART" id="SM00066">
    <property type="entry name" value="GAL4"/>
    <property type="match status" value="1"/>
</dbReference>
<dbReference type="SUPFAM" id="SSF57701">
    <property type="entry name" value="Zn2/Cys6 DNA-binding domain"/>
    <property type="match status" value="1"/>
</dbReference>
<dbReference type="PROSITE" id="PS50048">
    <property type="entry name" value="ZN2_CY6_FUNGAL_2"/>
    <property type="match status" value="1"/>
</dbReference>
<comment type="function">
    <text evidence="1">Transcription factor which regulates nonfermentable carbon utilization. Activator of gluconeogenetic genes (By similarity).</text>
</comment>
<comment type="subcellular location">
    <subcellularLocation>
        <location evidence="2">Nucleus</location>
    </subcellularLocation>
</comment>
<comment type="similarity">
    <text evidence="4">Belongs to the ERT1/acuK family.</text>
</comment>
<organism>
    <name type="scientific">Ajellomyces capsulatus (strain NAm1 / WU24)</name>
    <name type="common">Darling's disease fungus</name>
    <name type="synonym">Histoplasma capsulatum</name>
    <dbReference type="NCBI Taxonomy" id="2059318"/>
    <lineage>
        <taxon>Eukaryota</taxon>
        <taxon>Fungi</taxon>
        <taxon>Dikarya</taxon>
        <taxon>Ascomycota</taxon>
        <taxon>Pezizomycotina</taxon>
        <taxon>Eurotiomycetes</taxon>
        <taxon>Eurotiomycetidae</taxon>
        <taxon>Onygenales</taxon>
        <taxon>Ajellomycetaceae</taxon>
        <taxon>Histoplasma</taxon>
    </lineage>
</organism>
<accession>A6R213</accession>
<evidence type="ECO:0000250" key="1"/>
<evidence type="ECO:0000255" key="2">
    <source>
        <dbReference type="PROSITE-ProRule" id="PRU00227"/>
    </source>
</evidence>
<evidence type="ECO:0000256" key="3">
    <source>
        <dbReference type="SAM" id="MobiDB-lite"/>
    </source>
</evidence>
<evidence type="ECO:0000305" key="4"/>